<protein>
    <recommendedName>
        <fullName evidence="1">Transcription antitermination protein NusB</fullName>
    </recommendedName>
    <alternativeName>
        <fullName evidence="1">Antitermination factor NusB</fullName>
    </alternativeName>
</protein>
<organism>
    <name type="scientific">Buchnera aphidicola subsp. Acyrthosiphon pisum (strain Tuc7)</name>
    <dbReference type="NCBI Taxonomy" id="561501"/>
    <lineage>
        <taxon>Bacteria</taxon>
        <taxon>Pseudomonadati</taxon>
        <taxon>Pseudomonadota</taxon>
        <taxon>Gammaproteobacteria</taxon>
        <taxon>Enterobacterales</taxon>
        <taxon>Erwiniaceae</taxon>
        <taxon>Buchnera</taxon>
    </lineage>
</organism>
<name>NUSB_BUCAT</name>
<gene>
    <name evidence="1" type="primary">nusB</name>
    <name type="ordered locus">BUAPTUC7_457</name>
</gene>
<comment type="function">
    <text evidence="1">Involved in transcription antitermination. Required for transcription of ribosomal RNA (rRNA) genes. Binds specifically to the boxA antiterminator sequence of the ribosomal RNA (rrn) operons.</text>
</comment>
<comment type="similarity">
    <text evidence="1">Belongs to the NusB family.</text>
</comment>
<reference key="1">
    <citation type="journal article" date="2009" name="Science">
        <title>The dynamics and time scale of ongoing genomic erosion in symbiotic bacteria.</title>
        <authorList>
            <person name="Moran N.A."/>
            <person name="McLaughlin H.J."/>
            <person name="Sorek R."/>
        </authorList>
    </citation>
    <scope>NUCLEOTIDE SEQUENCE [LARGE SCALE GENOMIC DNA]</scope>
    <source>
        <strain>Tuc7</strain>
    </source>
</reference>
<accession>B8D7Z2</accession>
<sequence>MKPSFRRKARACALQVLYSWEISHNNIKESAIYFLKEKNKKNIDIVYFYELIIGITYDCKNIDNLMKPYLFRSLKELGHIERAILRISFYELHKRNDIPYKVSINEGIELAKLFGSEDSHKFINGVLDKAVFKMGYNKKVVIT</sequence>
<dbReference type="EMBL" id="CP001158">
    <property type="protein sequence ID" value="ACL30257.1"/>
    <property type="molecule type" value="Genomic_DNA"/>
</dbReference>
<dbReference type="RefSeq" id="WP_009874415.1">
    <property type="nucleotide sequence ID" value="NC_011834.1"/>
</dbReference>
<dbReference type="SMR" id="B8D7Z2"/>
<dbReference type="KEGG" id="bau:BUAPTUC7_457"/>
<dbReference type="HOGENOM" id="CLU_087843_4_1_6"/>
<dbReference type="GO" id="GO:0005829">
    <property type="term" value="C:cytosol"/>
    <property type="evidence" value="ECO:0007669"/>
    <property type="project" value="TreeGrafter"/>
</dbReference>
<dbReference type="GO" id="GO:0003723">
    <property type="term" value="F:RNA binding"/>
    <property type="evidence" value="ECO:0007669"/>
    <property type="project" value="UniProtKB-UniRule"/>
</dbReference>
<dbReference type="GO" id="GO:0006353">
    <property type="term" value="P:DNA-templated transcription termination"/>
    <property type="evidence" value="ECO:0007669"/>
    <property type="project" value="UniProtKB-UniRule"/>
</dbReference>
<dbReference type="GO" id="GO:0031564">
    <property type="term" value="P:transcription antitermination"/>
    <property type="evidence" value="ECO:0007669"/>
    <property type="project" value="UniProtKB-KW"/>
</dbReference>
<dbReference type="Gene3D" id="1.10.940.10">
    <property type="entry name" value="NusB-like"/>
    <property type="match status" value="1"/>
</dbReference>
<dbReference type="HAMAP" id="MF_00073">
    <property type="entry name" value="NusB"/>
    <property type="match status" value="1"/>
</dbReference>
<dbReference type="InterPro" id="IPR035926">
    <property type="entry name" value="NusB-like_sf"/>
</dbReference>
<dbReference type="InterPro" id="IPR011605">
    <property type="entry name" value="NusB_fam"/>
</dbReference>
<dbReference type="InterPro" id="IPR006027">
    <property type="entry name" value="NusB_RsmB_TIM44"/>
</dbReference>
<dbReference type="NCBIfam" id="TIGR01951">
    <property type="entry name" value="nusB"/>
    <property type="match status" value="1"/>
</dbReference>
<dbReference type="PANTHER" id="PTHR11078:SF3">
    <property type="entry name" value="ANTITERMINATION NUSB DOMAIN-CONTAINING PROTEIN"/>
    <property type="match status" value="1"/>
</dbReference>
<dbReference type="PANTHER" id="PTHR11078">
    <property type="entry name" value="N UTILIZATION SUBSTANCE PROTEIN B-RELATED"/>
    <property type="match status" value="1"/>
</dbReference>
<dbReference type="Pfam" id="PF01029">
    <property type="entry name" value="NusB"/>
    <property type="match status" value="1"/>
</dbReference>
<dbReference type="SUPFAM" id="SSF48013">
    <property type="entry name" value="NusB-like"/>
    <property type="match status" value="1"/>
</dbReference>
<proteinExistence type="inferred from homology"/>
<feature type="chain" id="PRO_1000192420" description="Transcription antitermination protein NusB">
    <location>
        <begin position="1"/>
        <end position="143"/>
    </location>
</feature>
<keyword id="KW-0694">RNA-binding</keyword>
<keyword id="KW-0804">Transcription</keyword>
<keyword id="KW-0889">Transcription antitermination</keyword>
<keyword id="KW-0805">Transcription regulation</keyword>
<evidence type="ECO:0000255" key="1">
    <source>
        <dbReference type="HAMAP-Rule" id="MF_00073"/>
    </source>
</evidence>